<comment type="function">
    <text evidence="1">Catalyzes the prenylation of para-hydroxybenzoate (PHB) with an all-trans polyprenyl group. Mediates the second step in the final reaction sequence of ubiquinone-8 (UQ-8) biosynthesis, which is the condensation of the polyisoprenoid side chain with PHB, generating the first membrane-bound Q intermediate 3-octaprenyl-4-hydroxybenzoate.</text>
</comment>
<comment type="catalytic activity">
    <reaction evidence="1">
        <text>all-trans-octaprenyl diphosphate + 4-hydroxybenzoate = 4-hydroxy-3-(all-trans-octaprenyl)benzoate + diphosphate</text>
        <dbReference type="Rhea" id="RHEA:27782"/>
        <dbReference type="ChEBI" id="CHEBI:1617"/>
        <dbReference type="ChEBI" id="CHEBI:17879"/>
        <dbReference type="ChEBI" id="CHEBI:33019"/>
        <dbReference type="ChEBI" id="CHEBI:57711"/>
        <dbReference type="EC" id="2.5.1.39"/>
    </reaction>
</comment>
<comment type="cofactor">
    <cofactor evidence="1">
        <name>Mg(2+)</name>
        <dbReference type="ChEBI" id="CHEBI:18420"/>
    </cofactor>
</comment>
<comment type="pathway">
    <text evidence="1">Cofactor biosynthesis; ubiquinone biosynthesis.</text>
</comment>
<comment type="subcellular location">
    <subcellularLocation>
        <location evidence="1">Cell inner membrane</location>
        <topology evidence="1">Multi-pass membrane protein</topology>
    </subcellularLocation>
</comment>
<comment type="similarity">
    <text evidence="1">Belongs to the UbiA prenyltransferase family.</text>
</comment>
<protein>
    <recommendedName>
        <fullName evidence="1">4-hydroxybenzoate octaprenyltransferase</fullName>
        <ecNumber evidence="1">2.5.1.39</ecNumber>
    </recommendedName>
    <alternativeName>
        <fullName evidence="1">4-HB polyprenyltransferase</fullName>
    </alternativeName>
</protein>
<organism>
    <name type="scientific">Xanthomonas campestris pv. campestris (strain 8004)</name>
    <dbReference type="NCBI Taxonomy" id="314565"/>
    <lineage>
        <taxon>Bacteria</taxon>
        <taxon>Pseudomonadati</taxon>
        <taxon>Pseudomonadota</taxon>
        <taxon>Gammaproteobacteria</taxon>
        <taxon>Lysobacterales</taxon>
        <taxon>Lysobacteraceae</taxon>
        <taxon>Xanthomonas</taxon>
    </lineage>
</organism>
<accession>Q4UZN6</accession>
<name>UBIA_XANC8</name>
<evidence type="ECO:0000255" key="1">
    <source>
        <dbReference type="HAMAP-Rule" id="MF_01635"/>
    </source>
</evidence>
<gene>
    <name evidence="1" type="primary">ubiA</name>
    <name type="ordered locus">XC_0402</name>
</gene>
<dbReference type="EC" id="2.5.1.39" evidence="1"/>
<dbReference type="EMBL" id="CP000050">
    <property type="protein sequence ID" value="AAY47487.1"/>
    <property type="molecule type" value="Genomic_DNA"/>
</dbReference>
<dbReference type="RefSeq" id="WP_011035644.1">
    <property type="nucleotide sequence ID" value="NZ_CP155948.1"/>
</dbReference>
<dbReference type="SMR" id="Q4UZN6"/>
<dbReference type="KEGG" id="xcb:XC_0402"/>
<dbReference type="HOGENOM" id="CLU_034879_1_0_6"/>
<dbReference type="BioCyc" id="MetaCyc:MONOMER-21243"/>
<dbReference type="UniPathway" id="UPA00232"/>
<dbReference type="Proteomes" id="UP000000420">
    <property type="component" value="Chromosome"/>
</dbReference>
<dbReference type="GO" id="GO:0005886">
    <property type="term" value="C:plasma membrane"/>
    <property type="evidence" value="ECO:0007669"/>
    <property type="project" value="UniProtKB-SubCell"/>
</dbReference>
<dbReference type="GO" id="GO:0008412">
    <property type="term" value="F:4-hydroxybenzoate polyprenyltransferase activity"/>
    <property type="evidence" value="ECO:0007669"/>
    <property type="project" value="UniProtKB-UniRule"/>
</dbReference>
<dbReference type="GO" id="GO:0006744">
    <property type="term" value="P:ubiquinone biosynthetic process"/>
    <property type="evidence" value="ECO:0007669"/>
    <property type="project" value="UniProtKB-UniRule"/>
</dbReference>
<dbReference type="CDD" id="cd13959">
    <property type="entry name" value="PT_UbiA_COQ2"/>
    <property type="match status" value="1"/>
</dbReference>
<dbReference type="FunFam" id="1.10.357.140:FF:000002">
    <property type="entry name" value="4-hydroxybenzoate octaprenyltransferase"/>
    <property type="match status" value="1"/>
</dbReference>
<dbReference type="FunFam" id="1.20.120.1780:FF:000001">
    <property type="entry name" value="4-hydroxybenzoate octaprenyltransferase"/>
    <property type="match status" value="1"/>
</dbReference>
<dbReference type="Gene3D" id="1.10.357.140">
    <property type="entry name" value="UbiA prenyltransferase"/>
    <property type="match status" value="1"/>
</dbReference>
<dbReference type="Gene3D" id="1.20.120.1780">
    <property type="entry name" value="UbiA prenyltransferase"/>
    <property type="match status" value="1"/>
</dbReference>
<dbReference type="HAMAP" id="MF_01635">
    <property type="entry name" value="UbiA"/>
    <property type="match status" value="1"/>
</dbReference>
<dbReference type="InterPro" id="IPR006370">
    <property type="entry name" value="HB_polyprenyltransferase-like"/>
</dbReference>
<dbReference type="InterPro" id="IPR039653">
    <property type="entry name" value="Prenyltransferase"/>
</dbReference>
<dbReference type="InterPro" id="IPR000537">
    <property type="entry name" value="UbiA_prenyltransferase"/>
</dbReference>
<dbReference type="InterPro" id="IPR030470">
    <property type="entry name" value="UbiA_prenylTrfase_CS"/>
</dbReference>
<dbReference type="InterPro" id="IPR044878">
    <property type="entry name" value="UbiA_sf"/>
</dbReference>
<dbReference type="NCBIfam" id="TIGR01474">
    <property type="entry name" value="ubiA_proteo"/>
    <property type="match status" value="1"/>
</dbReference>
<dbReference type="PANTHER" id="PTHR11048:SF28">
    <property type="entry name" value="4-HYDROXYBENZOATE POLYPRENYLTRANSFERASE, MITOCHONDRIAL"/>
    <property type="match status" value="1"/>
</dbReference>
<dbReference type="PANTHER" id="PTHR11048">
    <property type="entry name" value="PRENYLTRANSFERASES"/>
    <property type="match status" value="1"/>
</dbReference>
<dbReference type="Pfam" id="PF01040">
    <property type="entry name" value="UbiA"/>
    <property type="match status" value="1"/>
</dbReference>
<dbReference type="PROSITE" id="PS00943">
    <property type="entry name" value="UBIA"/>
    <property type="match status" value="1"/>
</dbReference>
<keyword id="KW-0997">Cell inner membrane</keyword>
<keyword id="KW-1003">Cell membrane</keyword>
<keyword id="KW-0460">Magnesium</keyword>
<keyword id="KW-0472">Membrane</keyword>
<keyword id="KW-0808">Transferase</keyword>
<keyword id="KW-0812">Transmembrane</keyword>
<keyword id="KW-1133">Transmembrane helix</keyword>
<keyword id="KW-0831">Ubiquinone biosynthesis</keyword>
<feature type="chain" id="PRO_0000262856" description="4-hydroxybenzoate octaprenyltransferase">
    <location>
        <begin position="1"/>
        <end position="301"/>
    </location>
</feature>
<feature type="transmembrane region" description="Helical" evidence="1">
    <location>
        <begin position="34"/>
        <end position="54"/>
    </location>
</feature>
<feature type="transmembrane region" description="Helical" evidence="1">
    <location>
        <begin position="57"/>
        <end position="77"/>
    </location>
</feature>
<feature type="transmembrane region" description="Helical" evidence="1">
    <location>
        <begin position="108"/>
        <end position="128"/>
    </location>
</feature>
<feature type="transmembrane region" description="Helical" evidence="1">
    <location>
        <begin position="163"/>
        <end position="183"/>
    </location>
</feature>
<feature type="transmembrane region" description="Helical" evidence="1">
    <location>
        <begin position="222"/>
        <end position="242"/>
    </location>
</feature>
<feature type="transmembrane region" description="Helical" evidence="1">
    <location>
        <begin position="248"/>
        <end position="268"/>
    </location>
</feature>
<feature type="transmembrane region" description="Helical" evidence="1">
    <location>
        <begin position="280"/>
        <end position="300"/>
    </location>
</feature>
<sequence length="301" mass="33437">MSKQGFKNVPMAPALTWPERLGQYWKLVRGDRPIGSLLLLWPTWWALWLAAGGLPPLWTLFVFTAGVWLTRSAGCVINDYADRWLDPHVERTKSRPLATGAVSGREALWVFVVLMLVAFALVLSLNWLTVALSVPGLFLAASYPYLKRHTHLPQVYLGMAFGWGIPMGFAAVQGSVPLLAWLLYAANILWATAYDTWYAMVDREDDLRMGSKSTAILFGRYDLIAQGVLYALMFAALVLVGLRAGLSIAYWAGLGIAALLVAYEFHIARHRERGPCFRAFLHNNWVGLAIFVGIAASLALR</sequence>
<proteinExistence type="inferred from homology"/>
<reference key="1">
    <citation type="journal article" date="2005" name="Genome Res.">
        <title>Comparative and functional genomic analyses of the pathogenicity of phytopathogen Xanthomonas campestris pv. campestris.</title>
        <authorList>
            <person name="Qian W."/>
            <person name="Jia Y."/>
            <person name="Ren S.-X."/>
            <person name="He Y.-Q."/>
            <person name="Feng J.-X."/>
            <person name="Lu L.-F."/>
            <person name="Sun Q."/>
            <person name="Ying G."/>
            <person name="Tang D.-J."/>
            <person name="Tang H."/>
            <person name="Wu W."/>
            <person name="Hao P."/>
            <person name="Wang L."/>
            <person name="Jiang B.-L."/>
            <person name="Zeng S."/>
            <person name="Gu W.-Y."/>
            <person name="Lu G."/>
            <person name="Rong L."/>
            <person name="Tian Y."/>
            <person name="Yao Z."/>
            <person name="Fu G."/>
            <person name="Chen B."/>
            <person name="Fang R."/>
            <person name="Qiang B."/>
            <person name="Chen Z."/>
            <person name="Zhao G.-P."/>
            <person name="Tang J.-L."/>
            <person name="He C."/>
        </authorList>
    </citation>
    <scope>NUCLEOTIDE SEQUENCE [LARGE SCALE GENOMIC DNA]</scope>
    <source>
        <strain>8004</strain>
    </source>
</reference>